<reference key="1">
    <citation type="submission" date="2008-01" db="EMBL/GenBank/DDBJ databases">
        <title>Complete sequence of Pseudomonas putida GB-1.</title>
        <authorList>
            <consortium name="US DOE Joint Genome Institute"/>
            <person name="Copeland A."/>
            <person name="Lucas S."/>
            <person name="Lapidus A."/>
            <person name="Barry K."/>
            <person name="Glavina del Rio T."/>
            <person name="Dalin E."/>
            <person name="Tice H."/>
            <person name="Pitluck S."/>
            <person name="Bruce D."/>
            <person name="Goodwin L."/>
            <person name="Chertkov O."/>
            <person name="Brettin T."/>
            <person name="Detter J.C."/>
            <person name="Han C."/>
            <person name="Kuske C.R."/>
            <person name="Schmutz J."/>
            <person name="Larimer F."/>
            <person name="Land M."/>
            <person name="Hauser L."/>
            <person name="Kyrpides N."/>
            <person name="Kim E."/>
            <person name="McCarthy J.K."/>
            <person name="Richardson P."/>
        </authorList>
    </citation>
    <scope>NUCLEOTIDE SEQUENCE [LARGE SCALE GENOMIC DNA]</scope>
    <source>
        <strain>GB-1</strain>
    </source>
</reference>
<accession>B0KH56</accession>
<gene>
    <name evidence="1" type="primary">ssuD</name>
    <name type="ordered locus">PputGB1_0262</name>
</gene>
<protein>
    <recommendedName>
        <fullName evidence="1">Alkanesulfonate monooxygenase</fullName>
        <ecNumber evidence="1">1.14.14.5</ecNumber>
    </recommendedName>
    <alternativeName>
        <fullName evidence="1">FMNH2-dependent aliphatic sulfonate monooxygenase</fullName>
    </alternativeName>
</protein>
<keyword id="KW-0285">Flavoprotein</keyword>
<keyword id="KW-0288">FMN</keyword>
<keyword id="KW-0503">Monooxygenase</keyword>
<keyword id="KW-0560">Oxidoreductase</keyword>
<proteinExistence type="inferred from homology"/>
<feature type="chain" id="PRO_1000085713" description="Alkanesulfonate monooxygenase">
    <location>
        <begin position="1"/>
        <end position="382"/>
    </location>
</feature>
<dbReference type="EC" id="1.14.14.5" evidence="1"/>
<dbReference type="EMBL" id="CP000926">
    <property type="protein sequence ID" value="ABY96175.1"/>
    <property type="molecule type" value="Genomic_DNA"/>
</dbReference>
<dbReference type="RefSeq" id="WP_012270044.1">
    <property type="nucleotide sequence ID" value="NC_010322.1"/>
</dbReference>
<dbReference type="SMR" id="B0KH56"/>
<dbReference type="KEGG" id="ppg:PputGB1_0262"/>
<dbReference type="eggNOG" id="COG2141">
    <property type="taxonomic scope" value="Bacteria"/>
</dbReference>
<dbReference type="HOGENOM" id="CLU_027853_1_0_6"/>
<dbReference type="Proteomes" id="UP000002157">
    <property type="component" value="Chromosome"/>
</dbReference>
<dbReference type="GO" id="GO:0008726">
    <property type="term" value="F:alkanesulfonate monooxygenase activity"/>
    <property type="evidence" value="ECO:0007669"/>
    <property type="project" value="UniProtKB-UniRule"/>
</dbReference>
<dbReference type="GO" id="GO:0046306">
    <property type="term" value="P:alkanesulfonate catabolic process"/>
    <property type="evidence" value="ECO:0007669"/>
    <property type="project" value="TreeGrafter"/>
</dbReference>
<dbReference type="CDD" id="cd01094">
    <property type="entry name" value="Alkanesulfonate_monoxygenase"/>
    <property type="match status" value="1"/>
</dbReference>
<dbReference type="FunFam" id="3.20.20.30:FF:000001">
    <property type="entry name" value="Alkanesulfonate monooxygenase"/>
    <property type="match status" value="1"/>
</dbReference>
<dbReference type="Gene3D" id="3.20.20.30">
    <property type="entry name" value="Luciferase-like domain"/>
    <property type="match status" value="1"/>
</dbReference>
<dbReference type="HAMAP" id="MF_01229">
    <property type="entry name" value="Alkanesulf_monooxygen"/>
    <property type="match status" value="1"/>
</dbReference>
<dbReference type="InterPro" id="IPR019911">
    <property type="entry name" value="Alkanesulphonate_mOase_FMN-dep"/>
</dbReference>
<dbReference type="InterPro" id="IPR011251">
    <property type="entry name" value="Luciferase-like_dom"/>
</dbReference>
<dbReference type="InterPro" id="IPR036661">
    <property type="entry name" value="Luciferase-like_sf"/>
</dbReference>
<dbReference type="InterPro" id="IPR050172">
    <property type="entry name" value="SsuD_RutA_monooxygenase"/>
</dbReference>
<dbReference type="NCBIfam" id="TIGR03565">
    <property type="entry name" value="alk_sulf_monoox"/>
    <property type="match status" value="1"/>
</dbReference>
<dbReference type="NCBIfam" id="NF001939">
    <property type="entry name" value="PRK00719.1"/>
    <property type="match status" value="1"/>
</dbReference>
<dbReference type="PANTHER" id="PTHR42847">
    <property type="entry name" value="ALKANESULFONATE MONOOXYGENASE"/>
    <property type="match status" value="1"/>
</dbReference>
<dbReference type="PANTHER" id="PTHR42847:SF4">
    <property type="entry name" value="ALKANESULFONATE MONOOXYGENASE-RELATED"/>
    <property type="match status" value="1"/>
</dbReference>
<dbReference type="Pfam" id="PF00296">
    <property type="entry name" value="Bac_luciferase"/>
    <property type="match status" value="1"/>
</dbReference>
<dbReference type="SUPFAM" id="SSF51679">
    <property type="entry name" value="Bacterial luciferase-like"/>
    <property type="match status" value="1"/>
</dbReference>
<sequence length="382" mass="41539">MSLNIFWFLPTHGDGKYLGTSDGARAVDHGYLQQIAQAADRLGFGGVLIPTGRSCEDSWLVAASLIPVTQRLKFLVALRPGIISPTVAARQAATLDRLSNGRALFNLVTGGDPDELAGDGLHLNHQERYEASVEFTRIWRKVLEGENVDYDGKHIQVKGAKLLYPPIQQPRPPLYFGGSSEAAQDLAAEQVELYLTWGEPPSAVAEKIAQVREKAAAQGREVRFGIRLHVIVRETNEEAWAAADRLISHLDDDTISRAQASLARFDSVGQQRMAALHGGNRDNLEVSPNLWAGVGLVRGGAGTALVGDGPTVAARVKEYAELGIDTFIFSGYPHLEESYRVAELLFPHLDVQRPEQPKTGGYVSPFGEMVANDILPKSVSQS</sequence>
<organism>
    <name type="scientific">Pseudomonas putida (strain GB-1)</name>
    <dbReference type="NCBI Taxonomy" id="76869"/>
    <lineage>
        <taxon>Bacteria</taxon>
        <taxon>Pseudomonadati</taxon>
        <taxon>Pseudomonadota</taxon>
        <taxon>Gammaproteobacteria</taxon>
        <taxon>Pseudomonadales</taxon>
        <taxon>Pseudomonadaceae</taxon>
        <taxon>Pseudomonas</taxon>
    </lineage>
</organism>
<name>SSUD_PSEPG</name>
<comment type="function">
    <text evidence="1">Catalyzes the desulfonation of aliphatic sulfonates.</text>
</comment>
<comment type="catalytic activity">
    <reaction evidence="1">
        <text>an alkanesulfonate + FMNH2 + O2 = an aldehyde + FMN + sulfite + H2O + 2 H(+)</text>
        <dbReference type="Rhea" id="RHEA:23064"/>
        <dbReference type="ChEBI" id="CHEBI:15377"/>
        <dbReference type="ChEBI" id="CHEBI:15378"/>
        <dbReference type="ChEBI" id="CHEBI:15379"/>
        <dbReference type="ChEBI" id="CHEBI:17359"/>
        <dbReference type="ChEBI" id="CHEBI:17478"/>
        <dbReference type="ChEBI" id="CHEBI:57618"/>
        <dbReference type="ChEBI" id="CHEBI:58210"/>
        <dbReference type="ChEBI" id="CHEBI:134249"/>
        <dbReference type="EC" id="1.14.14.5"/>
    </reaction>
</comment>
<comment type="similarity">
    <text evidence="1">Belongs to the SsuD family.</text>
</comment>
<evidence type="ECO:0000255" key="1">
    <source>
        <dbReference type="HAMAP-Rule" id="MF_01229"/>
    </source>
</evidence>